<evidence type="ECO:0000255" key="1">
    <source>
        <dbReference type="HAMAP-Rule" id="MF_01596"/>
    </source>
</evidence>
<evidence type="ECO:0000305" key="2"/>
<gene>
    <name evidence="1" type="primary">mgrB</name>
    <name type="ordered locus">CKO_01149</name>
</gene>
<protein>
    <recommendedName>
        <fullName evidence="1">PhoP/PhoQ regulator MgrB</fullName>
    </recommendedName>
</protein>
<accession>A8AFM8</accession>
<organism>
    <name type="scientific">Citrobacter koseri (strain ATCC BAA-895 / CDC 4225-83 / SGSC4696)</name>
    <dbReference type="NCBI Taxonomy" id="290338"/>
    <lineage>
        <taxon>Bacteria</taxon>
        <taxon>Pseudomonadati</taxon>
        <taxon>Pseudomonadota</taxon>
        <taxon>Gammaproteobacteria</taxon>
        <taxon>Enterobacterales</taxon>
        <taxon>Enterobacteriaceae</taxon>
        <taxon>Citrobacter</taxon>
    </lineage>
</organism>
<feature type="chain" id="PRO_0000330666" description="PhoP/PhoQ regulator MgrB">
    <location>
        <begin position="1"/>
        <end position="47"/>
    </location>
</feature>
<feature type="transmembrane region" description="Helical" evidence="1">
    <location>
        <begin position="6"/>
        <end position="26"/>
    </location>
</feature>
<proteinExistence type="inferred from homology"/>
<keyword id="KW-0997">Cell inner membrane</keyword>
<keyword id="KW-1003">Cell membrane</keyword>
<keyword id="KW-0472">Membrane</keyword>
<keyword id="KW-1185">Reference proteome</keyword>
<keyword id="KW-0812">Transmembrane</keyword>
<keyword id="KW-1133">Transmembrane helix</keyword>
<name>MGRB_CITK8</name>
<sequence>MKKFRWVILIIVALVCLLLWAQVFNIMCDQDVQFFNGICAINKFIPW</sequence>
<dbReference type="EMBL" id="CP000822">
    <property type="protein sequence ID" value="ABV12290.1"/>
    <property type="status" value="ALT_INIT"/>
    <property type="molecule type" value="Genomic_DNA"/>
</dbReference>
<dbReference type="RefSeq" id="WP_024130265.1">
    <property type="nucleotide sequence ID" value="NC_009792.1"/>
</dbReference>
<dbReference type="STRING" id="290338.CKO_01149"/>
<dbReference type="GeneID" id="45135286"/>
<dbReference type="KEGG" id="cko:CKO_01149"/>
<dbReference type="HOGENOM" id="CLU_208030_1_0_6"/>
<dbReference type="Proteomes" id="UP000008148">
    <property type="component" value="Chromosome"/>
</dbReference>
<dbReference type="GO" id="GO:0005886">
    <property type="term" value="C:plasma membrane"/>
    <property type="evidence" value="ECO:0007669"/>
    <property type="project" value="UniProtKB-SubCell"/>
</dbReference>
<dbReference type="GO" id="GO:0070298">
    <property type="term" value="P:negative regulation of phosphorelay signal transduction system"/>
    <property type="evidence" value="ECO:0007669"/>
    <property type="project" value="UniProtKB-UniRule"/>
</dbReference>
<dbReference type="HAMAP" id="MF_01596">
    <property type="entry name" value="MgrB"/>
    <property type="match status" value="1"/>
</dbReference>
<dbReference type="InterPro" id="IPR020907">
    <property type="entry name" value="MgrB"/>
</dbReference>
<dbReference type="NCBIfam" id="NF007635">
    <property type="entry name" value="PRK10299.1"/>
    <property type="match status" value="1"/>
</dbReference>
<dbReference type="Pfam" id="PF13998">
    <property type="entry name" value="MgrB"/>
    <property type="match status" value="1"/>
</dbReference>
<comment type="function">
    <text evidence="1">PhoP-regulated transcription is redox-sensitive, being activated when the periplasm becomes more reducing. MgrB acts between DsbA/DsbB and PhoP/PhoQ in this pathway. Represses PhoP/PhoQ signaling, possibly by binding to the periplasmic domain of PhoQ, altering its activity and that of downstream effector PhoP.</text>
</comment>
<comment type="subunit">
    <text evidence="1">May form homooligomers. Probably interacts with the periplasmic domain of PhoQ.</text>
</comment>
<comment type="subcellular location">
    <subcellularLocation>
        <location evidence="1">Cell inner membrane</location>
        <topology evidence="1">Single-pass membrane protein</topology>
    </subcellularLocation>
</comment>
<comment type="similarity">
    <text evidence="1">Belongs to the MgrB family.</text>
</comment>
<comment type="sequence caution" evidence="2">
    <conflict type="erroneous initiation">
        <sequence resource="EMBL-CDS" id="ABV12290"/>
    </conflict>
    <text>Extended N-terminus.</text>
</comment>
<reference key="1">
    <citation type="submission" date="2007-08" db="EMBL/GenBank/DDBJ databases">
        <authorList>
            <consortium name="The Citrobacter koseri Genome Sequencing Project"/>
            <person name="McClelland M."/>
            <person name="Sanderson E.K."/>
            <person name="Porwollik S."/>
            <person name="Spieth J."/>
            <person name="Clifton W.S."/>
            <person name="Latreille P."/>
            <person name="Courtney L."/>
            <person name="Wang C."/>
            <person name="Pepin K."/>
            <person name="Bhonagiri V."/>
            <person name="Nash W."/>
            <person name="Johnson M."/>
            <person name="Thiruvilangam P."/>
            <person name="Wilson R."/>
        </authorList>
    </citation>
    <scope>NUCLEOTIDE SEQUENCE [LARGE SCALE GENOMIC DNA]</scope>
    <source>
        <strain>ATCC BAA-895 / CDC 4225-83 / SGSC4696</strain>
    </source>
</reference>